<feature type="chain" id="PRO_0000386925" description="Ribosomal RNA small subunit methyltransferase H">
    <location>
        <begin position="1"/>
        <end position="311"/>
    </location>
</feature>
<feature type="binding site" evidence="1">
    <location>
        <begin position="34"/>
        <end position="36"/>
    </location>
    <ligand>
        <name>S-adenosyl-L-methionine</name>
        <dbReference type="ChEBI" id="CHEBI:59789"/>
    </ligand>
</feature>
<feature type="binding site" evidence="1">
    <location>
        <position position="54"/>
    </location>
    <ligand>
        <name>S-adenosyl-L-methionine</name>
        <dbReference type="ChEBI" id="CHEBI:59789"/>
    </ligand>
</feature>
<feature type="binding site" evidence="1">
    <location>
        <position position="78"/>
    </location>
    <ligand>
        <name>S-adenosyl-L-methionine</name>
        <dbReference type="ChEBI" id="CHEBI:59789"/>
    </ligand>
</feature>
<feature type="binding site" evidence="1">
    <location>
        <position position="100"/>
    </location>
    <ligand>
        <name>S-adenosyl-L-methionine</name>
        <dbReference type="ChEBI" id="CHEBI:59789"/>
    </ligand>
</feature>
<feature type="binding site" evidence="1">
    <location>
        <position position="107"/>
    </location>
    <ligand>
        <name>S-adenosyl-L-methionine</name>
        <dbReference type="ChEBI" id="CHEBI:59789"/>
    </ligand>
</feature>
<comment type="function">
    <text evidence="1">Specifically methylates the N4 position of cytidine in position 1402 (C1402) of 16S rRNA.</text>
</comment>
<comment type="catalytic activity">
    <reaction evidence="1">
        <text>cytidine(1402) in 16S rRNA + S-adenosyl-L-methionine = N(4)-methylcytidine(1402) in 16S rRNA + S-adenosyl-L-homocysteine + H(+)</text>
        <dbReference type="Rhea" id="RHEA:42928"/>
        <dbReference type="Rhea" id="RHEA-COMP:10286"/>
        <dbReference type="Rhea" id="RHEA-COMP:10287"/>
        <dbReference type="ChEBI" id="CHEBI:15378"/>
        <dbReference type="ChEBI" id="CHEBI:57856"/>
        <dbReference type="ChEBI" id="CHEBI:59789"/>
        <dbReference type="ChEBI" id="CHEBI:74506"/>
        <dbReference type="ChEBI" id="CHEBI:82748"/>
        <dbReference type="EC" id="2.1.1.199"/>
    </reaction>
</comment>
<comment type="subcellular location">
    <subcellularLocation>
        <location evidence="1">Cytoplasm</location>
    </subcellularLocation>
</comment>
<comment type="similarity">
    <text evidence="1">Belongs to the methyltransferase superfamily. RsmH family.</text>
</comment>
<accession>C4K744</accession>
<protein>
    <recommendedName>
        <fullName evidence="1">Ribosomal RNA small subunit methyltransferase H</fullName>
        <ecNumber evidence="1">2.1.1.199</ecNumber>
    </recommendedName>
    <alternativeName>
        <fullName evidence="1">16S rRNA m(4)C1402 methyltransferase</fullName>
    </alternativeName>
    <alternativeName>
        <fullName evidence="1">rRNA (cytosine-N(4)-)-methyltransferase RsmH</fullName>
    </alternativeName>
</protein>
<dbReference type="EC" id="2.1.1.199" evidence="1"/>
<dbReference type="EMBL" id="CP001277">
    <property type="protein sequence ID" value="ACQ68387.1"/>
    <property type="molecule type" value="Genomic_DNA"/>
</dbReference>
<dbReference type="RefSeq" id="WP_015874151.1">
    <property type="nucleotide sequence ID" value="NC_012751.1"/>
</dbReference>
<dbReference type="SMR" id="C4K744"/>
<dbReference type="STRING" id="572265.HDEF_1791"/>
<dbReference type="GeneID" id="66261382"/>
<dbReference type="KEGG" id="hde:HDEF_1791"/>
<dbReference type="eggNOG" id="COG0275">
    <property type="taxonomic scope" value="Bacteria"/>
</dbReference>
<dbReference type="HOGENOM" id="CLU_038422_2_0_6"/>
<dbReference type="Proteomes" id="UP000002334">
    <property type="component" value="Chromosome"/>
</dbReference>
<dbReference type="GO" id="GO:0005737">
    <property type="term" value="C:cytoplasm"/>
    <property type="evidence" value="ECO:0007669"/>
    <property type="project" value="UniProtKB-SubCell"/>
</dbReference>
<dbReference type="GO" id="GO:0071424">
    <property type="term" value="F:rRNA (cytosine-N4-)-methyltransferase activity"/>
    <property type="evidence" value="ECO:0007669"/>
    <property type="project" value="UniProtKB-UniRule"/>
</dbReference>
<dbReference type="GO" id="GO:0070475">
    <property type="term" value="P:rRNA base methylation"/>
    <property type="evidence" value="ECO:0007669"/>
    <property type="project" value="UniProtKB-UniRule"/>
</dbReference>
<dbReference type="FunFam" id="1.10.150.170:FF:000001">
    <property type="entry name" value="Ribosomal RNA small subunit methyltransferase H"/>
    <property type="match status" value="1"/>
</dbReference>
<dbReference type="Gene3D" id="1.10.150.170">
    <property type="entry name" value="Putative methyltransferase TM0872, insert domain"/>
    <property type="match status" value="1"/>
</dbReference>
<dbReference type="Gene3D" id="3.40.50.150">
    <property type="entry name" value="Vaccinia Virus protein VP39"/>
    <property type="match status" value="1"/>
</dbReference>
<dbReference type="HAMAP" id="MF_01007">
    <property type="entry name" value="16SrRNA_methyltr_H"/>
    <property type="match status" value="1"/>
</dbReference>
<dbReference type="InterPro" id="IPR002903">
    <property type="entry name" value="RsmH"/>
</dbReference>
<dbReference type="InterPro" id="IPR023397">
    <property type="entry name" value="SAM-dep_MeTrfase_MraW_recog"/>
</dbReference>
<dbReference type="InterPro" id="IPR029063">
    <property type="entry name" value="SAM-dependent_MTases_sf"/>
</dbReference>
<dbReference type="NCBIfam" id="TIGR00006">
    <property type="entry name" value="16S rRNA (cytosine(1402)-N(4))-methyltransferase RsmH"/>
    <property type="match status" value="1"/>
</dbReference>
<dbReference type="PANTHER" id="PTHR11265:SF0">
    <property type="entry name" value="12S RRNA N4-METHYLCYTIDINE METHYLTRANSFERASE"/>
    <property type="match status" value="1"/>
</dbReference>
<dbReference type="PANTHER" id="PTHR11265">
    <property type="entry name" value="S-ADENOSYL-METHYLTRANSFERASE MRAW"/>
    <property type="match status" value="1"/>
</dbReference>
<dbReference type="Pfam" id="PF01795">
    <property type="entry name" value="Methyltransf_5"/>
    <property type="match status" value="1"/>
</dbReference>
<dbReference type="PIRSF" id="PIRSF004486">
    <property type="entry name" value="MraW"/>
    <property type="match status" value="1"/>
</dbReference>
<dbReference type="SUPFAM" id="SSF81799">
    <property type="entry name" value="Putative methyltransferase TM0872, insert domain"/>
    <property type="match status" value="1"/>
</dbReference>
<dbReference type="SUPFAM" id="SSF53335">
    <property type="entry name" value="S-adenosyl-L-methionine-dependent methyltransferases"/>
    <property type="match status" value="1"/>
</dbReference>
<reference key="1">
    <citation type="journal article" date="2009" name="Proc. Natl. Acad. Sci. U.S.A.">
        <title>Hamiltonella defensa, genome evolution of protective bacterial endosymbiont from pathogenic ancestors.</title>
        <authorList>
            <person name="Degnan P.H."/>
            <person name="Yu Y."/>
            <person name="Sisneros N."/>
            <person name="Wing R.A."/>
            <person name="Moran N.A."/>
        </authorList>
    </citation>
    <scope>NUCLEOTIDE SEQUENCE [LARGE SCALE GENOMIC DNA]</scope>
    <source>
        <strain>5AT</strain>
    </source>
</reference>
<sequence length="311" mass="35335">MIDNQHKTVLLYEAVDSLNIQNDGIYIDATFGRGGHSSLILSRLGSQGKLISIDRDPEAVKKAKLMKDPRFSFIQGSFSDLYHYVKKLDLMGRINGLLFDLGVSSPQLDDAKRGFSFMRDGPLDMRMDPSRGLSAAEWLMKVNVENLAWVLKNFGEERFSTRLARAIVERNRLNPIKSTKELADLISHVIPVRNHHKHPATRSFQAIRIYINNELQEISSALNAALEILSLGARLSVVSFHSLEDRIVKNFIRQHSRGPQILRGLPLTEIQIQSMWQPKLKLIGKTMPSQKEVLDNPRSRSSILRFAERIN</sequence>
<name>RSMH_HAMD5</name>
<evidence type="ECO:0000255" key="1">
    <source>
        <dbReference type="HAMAP-Rule" id="MF_01007"/>
    </source>
</evidence>
<keyword id="KW-0963">Cytoplasm</keyword>
<keyword id="KW-0489">Methyltransferase</keyword>
<keyword id="KW-0698">rRNA processing</keyword>
<keyword id="KW-0949">S-adenosyl-L-methionine</keyword>
<keyword id="KW-0808">Transferase</keyword>
<proteinExistence type="inferred from homology"/>
<gene>
    <name evidence="1" type="primary">rsmH</name>
    <name type="synonym">mraW</name>
    <name type="ordered locus">HDEF_1791</name>
</gene>
<organism>
    <name type="scientific">Hamiltonella defensa subsp. Acyrthosiphon pisum (strain 5AT)</name>
    <dbReference type="NCBI Taxonomy" id="572265"/>
    <lineage>
        <taxon>Bacteria</taxon>
        <taxon>Pseudomonadati</taxon>
        <taxon>Pseudomonadota</taxon>
        <taxon>Gammaproteobacteria</taxon>
        <taxon>Enterobacterales</taxon>
        <taxon>Enterobacteriaceae</taxon>
        <taxon>aphid secondary symbionts</taxon>
        <taxon>Candidatus Hamiltonella</taxon>
    </lineage>
</organism>